<gene>
    <name evidence="1" type="primary">rplM</name>
    <name type="ordered locus">LSL_1403</name>
</gene>
<protein>
    <recommendedName>
        <fullName evidence="1">Large ribosomal subunit protein uL13</fullName>
    </recommendedName>
    <alternativeName>
        <fullName evidence="2">50S ribosomal protein L13</fullName>
    </alternativeName>
</protein>
<feature type="chain" id="PRO_0000261738" description="Large ribosomal subunit protein uL13">
    <location>
        <begin position="1"/>
        <end position="147"/>
    </location>
</feature>
<comment type="function">
    <text evidence="1">This protein is one of the early assembly proteins of the 50S ribosomal subunit, although it is not seen to bind rRNA by itself. It is important during the early stages of 50S assembly.</text>
</comment>
<comment type="subunit">
    <text evidence="1">Part of the 50S ribosomal subunit.</text>
</comment>
<comment type="similarity">
    <text evidence="1">Belongs to the universal ribosomal protein uL13 family.</text>
</comment>
<proteinExistence type="inferred from homology"/>
<keyword id="KW-1185">Reference proteome</keyword>
<keyword id="KW-0687">Ribonucleoprotein</keyword>
<keyword id="KW-0689">Ribosomal protein</keyword>
<organism>
    <name type="scientific">Ligilactobacillus salivarius (strain UCC118)</name>
    <name type="common">Lactobacillus salivarius</name>
    <dbReference type="NCBI Taxonomy" id="362948"/>
    <lineage>
        <taxon>Bacteria</taxon>
        <taxon>Bacillati</taxon>
        <taxon>Bacillota</taxon>
        <taxon>Bacilli</taxon>
        <taxon>Lactobacillales</taxon>
        <taxon>Lactobacillaceae</taxon>
        <taxon>Ligilactobacillus</taxon>
    </lineage>
</organism>
<dbReference type="EMBL" id="CP000233">
    <property type="protein sequence ID" value="ABE00207.1"/>
    <property type="molecule type" value="Genomic_DNA"/>
</dbReference>
<dbReference type="RefSeq" id="WP_011476333.1">
    <property type="nucleotide sequence ID" value="NC_007929.1"/>
</dbReference>
<dbReference type="RefSeq" id="YP_536290.1">
    <property type="nucleotide sequence ID" value="NC_007929.1"/>
</dbReference>
<dbReference type="SMR" id="Q1WSC2"/>
<dbReference type="STRING" id="362948.LSL_1403"/>
<dbReference type="KEGG" id="lsl:LSL_1403"/>
<dbReference type="PATRIC" id="fig|362948.14.peg.1486"/>
<dbReference type="HOGENOM" id="CLU_082184_2_2_9"/>
<dbReference type="OrthoDB" id="9801330at2"/>
<dbReference type="Proteomes" id="UP000006559">
    <property type="component" value="Chromosome"/>
</dbReference>
<dbReference type="GO" id="GO:0022625">
    <property type="term" value="C:cytosolic large ribosomal subunit"/>
    <property type="evidence" value="ECO:0007669"/>
    <property type="project" value="TreeGrafter"/>
</dbReference>
<dbReference type="GO" id="GO:0003729">
    <property type="term" value="F:mRNA binding"/>
    <property type="evidence" value="ECO:0007669"/>
    <property type="project" value="TreeGrafter"/>
</dbReference>
<dbReference type="GO" id="GO:0003735">
    <property type="term" value="F:structural constituent of ribosome"/>
    <property type="evidence" value="ECO:0007669"/>
    <property type="project" value="InterPro"/>
</dbReference>
<dbReference type="GO" id="GO:0017148">
    <property type="term" value="P:negative regulation of translation"/>
    <property type="evidence" value="ECO:0007669"/>
    <property type="project" value="TreeGrafter"/>
</dbReference>
<dbReference type="GO" id="GO:0006412">
    <property type="term" value="P:translation"/>
    <property type="evidence" value="ECO:0007669"/>
    <property type="project" value="UniProtKB-UniRule"/>
</dbReference>
<dbReference type="CDD" id="cd00392">
    <property type="entry name" value="Ribosomal_L13"/>
    <property type="match status" value="1"/>
</dbReference>
<dbReference type="FunFam" id="3.90.1180.10:FF:000001">
    <property type="entry name" value="50S ribosomal protein L13"/>
    <property type="match status" value="1"/>
</dbReference>
<dbReference type="Gene3D" id="3.90.1180.10">
    <property type="entry name" value="Ribosomal protein L13"/>
    <property type="match status" value="1"/>
</dbReference>
<dbReference type="HAMAP" id="MF_01366">
    <property type="entry name" value="Ribosomal_uL13"/>
    <property type="match status" value="1"/>
</dbReference>
<dbReference type="InterPro" id="IPR005822">
    <property type="entry name" value="Ribosomal_uL13"/>
</dbReference>
<dbReference type="InterPro" id="IPR005823">
    <property type="entry name" value="Ribosomal_uL13_bac-type"/>
</dbReference>
<dbReference type="InterPro" id="IPR023563">
    <property type="entry name" value="Ribosomal_uL13_CS"/>
</dbReference>
<dbReference type="InterPro" id="IPR036899">
    <property type="entry name" value="Ribosomal_uL13_sf"/>
</dbReference>
<dbReference type="NCBIfam" id="TIGR01066">
    <property type="entry name" value="rplM_bact"/>
    <property type="match status" value="1"/>
</dbReference>
<dbReference type="PANTHER" id="PTHR11545:SF2">
    <property type="entry name" value="LARGE RIBOSOMAL SUBUNIT PROTEIN UL13M"/>
    <property type="match status" value="1"/>
</dbReference>
<dbReference type="PANTHER" id="PTHR11545">
    <property type="entry name" value="RIBOSOMAL PROTEIN L13"/>
    <property type="match status" value="1"/>
</dbReference>
<dbReference type="Pfam" id="PF00572">
    <property type="entry name" value="Ribosomal_L13"/>
    <property type="match status" value="1"/>
</dbReference>
<dbReference type="PIRSF" id="PIRSF002181">
    <property type="entry name" value="Ribosomal_L13"/>
    <property type="match status" value="1"/>
</dbReference>
<dbReference type="SUPFAM" id="SSF52161">
    <property type="entry name" value="Ribosomal protein L13"/>
    <property type="match status" value="1"/>
</dbReference>
<dbReference type="PROSITE" id="PS00783">
    <property type="entry name" value="RIBOSOMAL_L13"/>
    <property type="match status" value="1"/>
</dbReference>
<sequence length="147" mass="16314">MRTTYIAKPGEVERKWYVVDATDVPLGRLSSAVASILRGKNKPTFTPNVDTGDYVIVINAEKVALTGRKASNKVYYHHSNHPGGLKARTAGDYREKDPEKLLALSVKGMLPKGTLGRQQAKKLHVYRGADHKHEAQQPEVLDINKLI</sequence>
<evidence type="ECO:0000255" key="1">
    <source>
        <dbReference type="HAMAP-Rule" id="MF_01366"/>
    </source>
</evidence>
<evidence type="ECO:0000305" key="2"/>
<name>RL13_LIGS1</name>
<accession>Q1WSC2</accession>
<reference key="1">
    <citation type="journal article" date="2006" name="Proc. Natl. Acad. Sci. U.S.A.">
        <title>Multireplicon genome architecture of Lactobacillus salivarius.</title>
        <authorList>
            <person name="Claesson M.J."/>
            <person name="Li Y."/>
            <person name="Leahy S."/>
            <person name="Canchaya C."/>
            <person name="van Pijkeren J.P."/>
            <person name="Cerdeno-Tarraga A.M."/>
            <person name="Parkhill J."/>
            <person name="Flynn S."/>
            <person name="O'Sullivan G.C."/>
            <person name="Collins J.K."/>
            <person name="Higgins D."/>
            <person name="Shanahan F."/>
            <person name="Fitzgerald G.F."/>
            <person name="van Sinderen D."/>
            <person name="O'Toole P.W."/>
        </authorList>
    </citation>
    <scope>NUCLEOTIDE SEQUENCE [LARGE SCALE GENOMIC DNA]</scope>
    <source>
        <strain>UCC118</strain>
    </source>
</reference>